<keyword id="KW-0028">Amino-acid biosynthesis</keyword>
<keyword id="KW-0963">Cytoplasm</keyword>
<keyword id="KW-0368">Histidine biosynthesis</keyword>
<keyword id="KW-0378">Hydrolase</keyword>
<keyword id="KW-0460">Magnesium</keyword>
<keyword id="KW-0479">Metal-binding</keyword>
<keyword id="KW-0862">Zinc</keyword>
<dbReference type="EC" id="3.5.4.19" evidence="1"/>
<dbReference type="EMBL" id="CP000887">
    <property type="protein sequence ID" value="ACD72528.1"/>
    <property type="molecule type" value="Genomic_DNA"/>
</dbReference>
<dbReference type="RefSeq" id="WP_002966830.1">
    <property type="nucleotide sequence ID" value="NC_010742.1"/>
</dbReference>
<dbReference type="SMR" id="B2S5T1"/>
<dbReference type="GeneID" id="97533666"/>
<dbReference type="KEGG" id="bmc:BAbS19_I10190"/>
<dbReference type="HOGENOM" id="CLU_048577_5_0_5"/>
<dbReference type="UniPathway" id="UPA00031">
    <property type="reaction ID" value="UER00008"/>
</dbReference>
<dbReference type="Proteomes" id="UP000002565">
    <property type="component" value="Chromosome 1"/>
</dbReference>
<dbReference type="GO" id="GO:0005737">
    <property type="term" value="C:cytoplasm"/>
    <property type="evidence" value="ECO:0007669"/>
    <property type="project" value="UniProtKB-SubCell"/>
</dbReference>
<dbReference type="GO" id="GO:0000287">
    <property type="term" value="F:magnesium ion binding"/>
    <property type="evidence" value="ECO:0007669"/>
    <property type="project" value="UniProtKB-UniRule"/>
</dbReference>
<dbReference type="GO" id="GO:0004635">
    <property type="term" value="F:phosphoribosyl-AMP cyclohydrolase activity"/>
    <property type="evidence" value="ECO:0007669"/>
    <property type="project" value="UniProtKB-UniRule"/>
</dbReference>
<dbReference type="GO" id="GO:0008270">
    <property type="term" value="F:zinc ion binding"/>
    <property type="evidence" value="ECO:0007669"/>
    <property type="project" value="UniProtKB-UniRule"/>
</dbReference>
<dbReference type="GO" id="GO:0000105">
    <property type="term" value="P:L-histidine biosynthetic process"/>
    <property type="evidence" value="ECO:0007669"/>
    <property type="project" value="UniProtKB-UniRule"/>
</dbReference>
<dbReference type="FunFam" id="3.10.20.810:FF:000001">
    <property type="entry name" value="Histidine biosynthesis bifunctional protein HisIE"/>
    <property type="match status" value="1"/>
</dbReference>
<dbReference type="Gene3D" id="4.10.80.70">
    <property type="match status" value="1"/>
</dbReference>
<dbReference type="Gene3D" id="3.10.20.810">
    <property type="entry name" value="Phosphoribosyl-AMP cyclohydrolase"/>
    <property type="match status" value="1"/>
</dbReference>
<dbReference type="HAMAP" id="MF_01021">
    <property type="entry name" value="HisI"/>
    <property type="match status" value="1"/>
</dbReference>
<dbReference type="InterPro" id="IPR026660">
    <property type="entry name" value="PRA-CH"/>
</dbReference>
<dbReference type="InterPro" id="IPR002496">
    <property type="entry name" value="PRib_AMP_CycHydrolase_dom"/>
</dbReference>
<dbReference type="InterPro" id="IPR038019">
    <property type="entry name" value="PRib_AMP_CycHydrolase_sf"/>
</dbReference>
<dbReference type="NCBIfam" id="NF000768">
    <property type="entry name" value="PRK00051.1"/>
    <property type="match status" value="1"/>
</dbReference>
<dbReference type="PANTHER" id="PTHR42945">
    <property type="entry name" value="HISTIDINE BIOSYNTHESIS BIFUNCTIONAL PROTEIN"/>
    <property type="match status" value="1"/>
</dbReference>
<dbReference type="PANTHER" id="PTHR42945:SF1">
    <property type="entry name" value="HISTIDINE BIOSYNTHESIS BIFUNCTIONAL PROTEIN HIS7"/>
    <property type="match status" value="1"/>
</dbReference>
<dbReference type="Pfam" id="PF01502">
    <property type="entry name" value="PRA-CH"/>
    <property type="match status" value="1"/>
</dbReference>
<dbReference type="SUPFAM" id="SSF141734">
    <property type="entry name" value="HisI-like"/>
    <property type="match status" value="1"/>
</dbReference>
<accession>B2S5T1</accession>
<organism>
    <name type="scientific">Brucella abortus (strain S19)</name>
    <dbReference type="NCBI Taxonomy" id="430066"/>
    <lineage>
        <taxon>Bacteria</taxon>
        <taxon>Pseudomonadati</taxon>
        <taxon>Pseudomonadota</taxon>
        <taxon>Alphaproteobacteria</taxon>
        <taxon>Hyphomicrobiales</taxon>
        <taxon>Brucellaceae</taxon>
        <taxon>Brucella/Ochrobactrum group</taxon>
        <taxon>Brucella</taxon>
    </lineage>
</organism>
<protein>
    <recommendedName>
        <fullName evidence="1">Phosphoribosyl-AMP cyclohydrolase</fullName>
        <shortName evidence="1">PRA-CH</shortName>
        <ecNumber evidence="1">3.5.4.19</ecNumber>
    </recommendedName>
</protein>
<proteinExistence type="inferred from homology"/>
<name>HIS3_BRUA1</name>
<feature type="chain" id="PRO_1000135336" description="Phosphoribosyl-AMP cyclohydrolase">
    <location>
        <begin position="1"/>
        <end position="139"/>
    </location>
</feature>
<feature type="binding site" evidence="1">
    <location>
        <position position="91"/>
    </location>
    <ligand>
        <name>Mg(2+)</name>
        <dbReference type="ChEBI" id="CHEBI:18420"/>
    </ligand>
</feature>
<feature type="binding site" evidence="1">
    <location>
        <position position="92"/>
    </location>
    <ligand>
        <name>Zn(2+)</name>
        <dbReference type="ChEBI" id="CHEBI:29105"/>
        <note>ligand shared between dimeric partners</note>
    </ligand>
</feature>
<feature type="binding site" evidence="1">
    <location>
        <position position="93"/>
    </location>
    <ligand>
        <name>Mg(2+)</name>
        <dbReference type="ChEBI" id="CHEBI:18420"/>
    </ligand>
</feature>
<feature type="binding site" evidence="1">
    <location>
        <position position="95"/>
    </location>
    <ligand>
        <name>Mg(2+)</name>
        <dbReference type="ChEBI" id="CHEBI:18420"/>
    </ligand>
</feature>
<feature type="binding site" evidence="1">
    <location>
        <position position="110"/>
    </location>
    <ligand>
        <name>Zn(2+)</name>
        <dbReference type="ChEBI" id="CHEBI:29105"/>
        <note>ligand shared between dimeric partners</note>
    </ligand>
</feature>
<feature type="binding site" evidence="1">
    <location>
        <position position="117"/>
    </location>
    <ligand>
        <name>Zn(2+)</name>
        <dbReference type="ChEBI" id="CHEBI:29105"/>
        <note>ligand shared between dimeric partners</note>
    </ligand>
</feature>
<sequence>MSIFPAQPSDKKAVEEGAAFMPRFDASGLITAIVTDARDGELLMVAHMNEEALRLTLETGIAHYWSRSRKTLWKKGETSGNLQSVVELRTDCDQDALWLKVHVAGDGPTCHTGRRSCFYRQVVSSGGKVALTMASDHDQ</sequence>
<comment type="function">
    <text evidence="1">Catalyzes the hydrolysis of the adenine ring of phosphoribosyl-AMP.</text>
</comment>
<comment type="catalytic activity">
    <reaction evidence="1">
        <text>1-(5-phospho-beta-D-ribosyl)-5'-AMP + H2O = 1-(5-phospho-beta-D-ribosyl)-5-[(5-phospho-beta-D-ribosylamino)methylideneamino]imidazole-4-carboxamide</text>
        <dbReference type="Rhea" id="RHEA:20049"/>
        <dbReference type="ChEBI" id="CHEBI:15377"/>
        <dbReference type="ChEBI" id="CHEBI:58435"/>
        <dbReference type="ChEBI" id="CHEBI:59457"/>
        <dbReference type="EC" id="3.5.4.19"/>
    </reaction>
</comment>
<comment type="cofactor">
    <cofactor evidence="1">
        <name>Mg(2+)</name>
        <dbReference type="ChEBI" id="CHEBI:18420"/>
    </cofactor>
    <text evidence="1">Binds 1 Mg(2+) ion per subunit.</text>
</comment>
<comment type="cofactor">
    <cofactor evidence="1">
        <name>Zn(2+)</name>
        <dbReference type="ChEBI" id="CHEBI:29105"/>
    </cofactor>
    <text evidence="1">Binds 1 zinc ion per subunit.</text>
</comment>
<comment type="pathway">
    <text evidence="1">Amino-acid biosynthesis; L-histidine biosynthesis; L-histidine from 5-phospho-alpha-D-ribose 1-diphosphate: step 3/9.</text>
</comment>
<comment type="subunit">
    <text evidence="1">Homodimer.</text>
</comment>
<comment type="subcellular location">
    <subcellularLocation>
        <location evidence="1">Cytoplasm</location>
    </subcellularLocation>
</comment>
<comment type="similarity">
    <text evidence="1">Belongs to the PRA-CH family.</text>
</comment>
<reference key="1">
    <citation type="journal article" date="2008" name="PLoS ONE">
        <title>Genome sequence of Brucella abortus vaccine strain S19 compared to virulent strains yields candidate virulence genes.</title>
        <authorList>
            <person name="Crasta O.R."/>
            <person name="Folkerts O."/>
            <person name="Fei Z."/>
            <person name="Mane S.P."/>
            <person name="Evans C."/>
            <person name="Martino-Catt S."/>
            <person name="Bricker B."/>
            <person name="Yu G."/>
            <person name="Du L."/>
            <person name="Sobral B.W."/>
        </authorList>
    </citation>
    <scope>NUCLEOTIDE SEQUENCE [LARGE SCALE GENOMIC DNA]</scope>
    <source>
        <strain>S19</strain>
    </source>
</reference>
<evidence type="ECO:0000255" key="1">
    <source>
        <dbReference type="HAMAP-Rule" id="MF_01021"/>
    </source>
</evidence>
<gene>
    <name evidence="1" type="primary">hisI</name>
    <name type="ordered locus">BAbS19_I10190</name>
</gene>